<comment type="function">
    <text evidence="1">Receptor that may play a role in the perception of bitterness and is gustducin-linked. May play a role in sensing the chemical composition of the gastrointestinal content. The activity of this receptor may stimulate alpha gustducin, mediate PLC-beta-2 activation and lead to the gating of TRPM5 (By similarity).</text>
</comment>
<comment type="subcellular location">
    <subcellularLocation>
        <location>Membrane</location>
        <topology>Multi-pass membrane protein</topology>
    </subcellularLocation>
</comment>
<comment type="miscellaneous">
    <text>Most taste cells may be activated by a limited number of bitter compounds; individual taste cells can discriminate among bitter stimuli.</text>
</comment>
<comment type="similarity">
    <text evidence="3">Belongs to the G-protein coupled receptor T2R family.</text>
</comment>
<organism>
    <name type="scientific">Pan paniscus</name>
    <name type="common">Pygmy chimpanzee</name>
    <name type="synonym">Bonobo</name>
    <dbReference type="NCBI Taxonomy" id="9597"/>
    <lineage>
        <taxon>Eukaryota</taxon>
        <taxon>Metazoa</taxon>
        <taxon>Chordata</taxon>
        <taxon>Craniata</taxon>
        <taxon>Vertebrata</taxon>
        <taxon>Euteleostomi</taxon>
        <taxon>Mammalia</taxon>
        <taxon>Eutheria</taxon>
        <taxon>Euarchontoglires</taxon>
        <taxon>Primates</taxon>
        <taxon>Haplorrhini</taxon>
        <taxon>Catarrhini</taxon>
        <taxon>Hominidae</taxon>
        <taxon>Pan</taxon>
    </lineage>
</organism>
<name>TA2R8_PANPA</name>
<protein>
    <recommendedName>
        <fullName>Taste receptor type 2 member 8</fullName>
        <shortName>T2R8</shortName>
    </recommendedName>
</protein>
<reference key="1">
    <citation type="journal article" date="2005" name="Mol. Biol. Evol.">
        <title>Evolution of bitter taste receptors in humans and apes.</title>
        <authorList>
            <person name="Fischer A."/>
            <person name="Gilad Y."/>
            <person name="Man O."/>
            <person name="Paeaebo S."/>
        </authorList>
    </citation>
    <scope>NUCLEOTIDE SEQUENCE [GENOMIC DNA]</scope>
</reference>
<reference key="2">
    <citation type="journal article" date="2004" name="Proc. Natl. Acad. Sci. U.S.A.">
        <title>Divergence of T2R chemosensory receptor families in humans, bonobos, and chimpanzees.</title>
        <authorList>
            <person name="Parry C.M."/>
            <person name="Erkner A."/>
            <person name="le Coutre J."/>
        </authorList>
    </citation>
    <scope>NUCLEOTIDE SEQUENCE [GENOMIC DNA]</scope>
</reference>
<gene>
    <name type="primary">TAS2R8</name>
</gene>
<dbReference type="EMBL" id="AY724842">
    <property type="protein sequence ID" value="AAU21074.1"/>
    <property type="molecule type" value="Genomic_DNA"/>
</dbReference>
<dbReference type="EMBL" id="AY677137">
    <property type="protein sequence ID" value="AAV28566.1"/>
    <property type="molecule type" value="Genomic_DNA"/>
</dbReference>
<dbReference type="STRING" id="9597.ENSPPAP00000003974"/>
<dbReference type="GlyCosmos" id="Q646E5">
    <property type="glycosylation" value="1 site, No reported glycans"/>
</dbReference>
<dbReference type="eggNOG" id="ENOG502SKRK">
    <property type="taxonomic scope" value="Eukaryota"/>
</dbReference>
<dbReference type="Proteomes" id="UP000240080">
    <property type="component" value="Unplaced"/>
</dbReference>
<dbReference type="GO" id="GO:0005886">
    <property type="term" value="C:plasma membrane"/>
    <property type="evidence" value="ECO:0007669"/>
    <property type="project" value="UniProtKB-ARBA"/>
</dbReference>
<dbReference type="GO" id="GO:0033038">
    <property type="term" value="F:bitter taste receptor activity"/>
    <property type="evidence" value="ECO:0007669"/>
    <property type="project" value="InterPro"/>
</dbReference>
<dbReference type="GO" id="GO:0004930">
    <property type="term" value="F:G protein-coupled receptor activity"/>
    <property type="evidence" value="ECO:0007669"/>
    <property type="project" value="UniProtKB-KW"/>
</dbReference>
<dbReference type="CDD" id="cd15022">
    <property type="entry name" value="7tm_TAS2R8"/>
    <property type="match status" value="1"/>
</dbReference>
<dbReference type="FunFam" id="1.20.1070.10:FF:000042">
    <property type="entry name" value="Taste receptor type 2 member 7"/>
    <property type="match status" value="1"/>
</dbReference>
<dbReference type="Gene3D" id="1.20.1070.10">
    <property type="entry name" value="Rhodopsin 7-helix transmembrane proteins"/>
    <property type="match status" value="1"/>
</dbReference>
<dbReference type="InterPro" id="IPR017452">
    <property type="entry name" value="GPCR_Rhodpsn_7TM"/>
</dbReference>
<dbReference type="InterPro" id="IPR007960">
    <property type="entry name" value="TAS2R"/>
</dbReference>
<dbReference type="PANTHER" id="PTHR11394">
    <property type="entry name" value="TASTE RECEPTOR TYPE 2"/>
    <property type="match status" value="1"/>
</dbReference>
<dbReference type="PANTHER" id="PTHR11394:SF31">
    <property type="entry name" value="TASTE RECEPTOR TYPE 2 MEMBER 8"/>
    <property type="match status" value="1"/>
</dbReference>
<dbReference type="Pfam" id="PF05296">
    <property type="entry name" value="TAS2R"/>
    <property type="match status" value="1"/>
</dbReference>
<dbReference type="SUPFAM" id="SSF81321">
    <property type="entry name" value="Family A G protein-coupled receptor-like"/>
    <property type="match status" value="1"/>
</dbReference>
<dbReference type="PROSITE" id="PS50262">
    <property type="entry name" value="G_PROTEIN_RECEP_F1_2"/>
    <property type="match status" value="1"/>
</dbReference>
<feature type="chain" id="PRO_0000082228" description="Taste receptor type 2 member 8">
    <location>
        <begin position="1"/>
        <end position="309"/>
    </location>
</feature>
<feature type="topological domain" description="Extracellular" evidence="2">
    <location>
        <begin position="1"/>
        <end position="7"/>
    </location>
</feature>
<feature type="transmembrane region" description="Helical; Name=1" evidence="2">
    <location>
        <begin position="8"/>
        <end position="28"/>
    </location>
</feature>
<feature type="topological domain" description="Cytoplasmic" evidence="2">
    <location>
        <begin position="29"/>
        <end position="50"/>
    </location>
</feature>
<feature type="transmembrane region" description="Helical; Name=2" evidence="2">
    <location>
        <begin position="51"/>
        <end position="71"/>
    </location>
</feature>
<feature type="topological domain" description="Extracellular" evidence="2">
    <location>
        <begin position="72"/>
        <end position="82"/>
    </location>
</feature>
<feature type="transmembrane region" description="Helical; Name=3" evidence="2">
    <location>
        <begin position="83"/>
        <end position="103"/>
    </location>
</feature>
<feature type="topological domain" description="Cytoplasmic" evidence="2">
    <location>
        <begin position="104"/>
        <end position="131"/>
    </location>
</feature>
<feature type="transmembrane region" description="Helical; Name=4" evidence="2">
    <location>
        <begin position="132"/>
        <end position="152"/>
    </location>
</feature>
<feature type="topological domain" description="Extracellular" evidence="2">
    <location>
        <begin position="153"/>
        <end position="184"/>
    </location>
</feature>
<feature type="transmembrane region" description="Helical; Name=5" evidence="2">
    <location>
        <begin position="185"/>
        <end position="205"/>
    </location>
</feature>
<feature type="topological domain" description="Cytoplasmic" evidence="2">
    <location>
        <begin position="206"/>
        <end position="239"/>
    </location>
</feature>
<feature type="transmembrane region" description="Helical; Name=6" evidence="2">
    <location>
        <begin position="240"/>
        <end position="260"/>
    </location>
</feature>
<feature type="topological domain" description="Extracellular" evidence="2">
    <location>
        <begin position="261"/>
        <end position="266"/>
    </location>
</feature>
<feature type="transmembrane region" description="Helical; Name=7" evidence="2">
    <location>
        <begin position="267"/>
        <end position="287"/>
    </location>
</feature>
<feature type="topological domain" description="Cytoplasmic" evidence="2">
    <location>
        <begin position="288"/>
        <end position="309"/>
    </location>
</feature>
<feature type="glycosylation site" description="N-linked (GlcNAc...) asparagine" evidence="2">
    <location>
        <position position="167"/>
    </location>
</feature>
<feature type="sequence conflict" description="In Ref. 2; AAV28566." evidence="3" ref="2">
    <original>L</original>
    <variation>K</variation>
    <location>
        <position position="292"/>
    </location>
</feature>
<feature type="sequence conflict" description="In Ref. 2; AAV28566." evidence="3" ref="2">
    <original>V</original>
    <variation>M</variation>
    <location>
        <position position="308"/>
    </location>
</feature>
<evidence type="ECO:0000250" key="1"/>
<evidence type="ECO:0000255" key="2"/>
<evidence type="ECO:0000305" key="3"/>
<sequence length="309" mass="35840">MFSPADNIFIILITGEFILGILGNGYIALVNWIDWIKKKKISTVDYILTNLVIARICLISVMVVNGIVIVLNPDVYTKNKQQIVIFTFWTFANYLNMWITTCLNVFYFLKIASSSHPLFLWLKWKIDMVVHWILLGCFAISLLVSLIAAIVLSCDYRFHAIAKHKRNITEMFHVSKXPYFEPLTLFNLFAIVPFIVSLISFFLLVRSLWRHTKQIKLYATGSRDPSTEVHVRAIKTMTSFIFFFFLYFISSILMTFSYLMTKYKLAVEFGEIAAILYPLGHSLILIVLNNKLRQIFVRMLTCRKIACVI</sequence>
<proteinExistence type="inferred from homology"/>
<keyword id="KW-0297">G-protein coupled receptor</keyword>
<keyword id="KW-0325">Glycoprotein</keyword>
<keyword id="KW-0472">Membrane</keyword>
<keyword id="KW-0675">Receptor</keyword>
<keyword id="KW-1185">Reference proteome</keyword>
<keyword id="KW-0716">Sensory transduction</keyword>
<keyword id="KW-0919">Taste</keyword>
<keyword id="KW-0807">Transducer</keyword>
<keyword id="KW-0812">Transmembrane</keyword>
<keyword id="KW-1133">Transmembrane helix</keyword>
<accession>Q646E5</accession>
<accession>Q5Y509</accession>